<keyword id="KW-1003">Cell membrane</keyword>
<keyword id="KW-0472">Membrane</keyword>
<keyword id="KW-0677">Repeat</keyword>
<keyword id="KW-0812">Transmembrane</keyword>
<keyword id="KW-1133">Transmembrane helix</keyword>
<keyword id="KW-0813">Transport</keyword>
<organism>
    <name type="scientific">Escherichia fergusonii (strain ATCC 35469 / DSM 13698 / CCUG 18766 / IAM 14443 / JCM 21226 / LMG 7866 / NBRC 102419 / NCTC 12128 / CDC 0568-73)</name>
    <dbReference type="NCBI Taxonomy" id="585054"/>
    <lineage>
        <taxon>Bacteria</taxon>
        <taxon>Pseudomonadati</taxon>
        <taxon>Pseudomonadota</taxon>
        <taxon>Gammaproteobacteria</taxon>
        <taxon>Enterobacterales</taxon>
        <taxon>Enterobacteriaceae</taxon>
        <taxon>Escherichia</taxon>
    </lineage>
</organism>
<proteinExistence type="inferred from homology"/>
<reference key="1">
    <citation type="journal article" date="2009" name="PLoS Genet.">
        <title>Organised genome dynamics in the Escherichia coli species results in highly diverse adaptive paths.</title>
        <authorList>
            <person name="Touchon M."/>
            <person name="Hoede C."/>
            <person name="Tenaillon O."/>
            <person name="Barbe V."/>
            <person name="Baeriswyl S."/>
            <person name="Bidet P."/>
            <person name="Bingen E."/>
            <person name="Bonacorsi S."/>
            <person name="Bouchier C."/>
            <person name="Bouvet O."/>
            <person name="Calteau A."/>
            <person name="Chiapello H."/>
            <person name="Clermont O."/>
            <person name="Cruveiller S."/>
            <person name="Danchin A."/>
            <person name="Diard M."/>
            <person name="Dossat C."/>
            <person name="Karoui M.E."/>
            <person name="Frapy E."/>
            <person name="Garry L."/>
            <person name="Ghigo J.M."/>
            <person name="Gilles A.M."/>
            <person name="Johnson J."/>
            <person name="Le Bouguenec C."/>
            <person name="Lescat M."/>
            <person name="Mangenot S."/>
            <person name="Martinez-Jehanne V."/>
            <person name="Matic I."/>
            <person name="Nassif X."/>
            <person name="Oztas S."/>
            <person name="Petit M.A."/>
            <person name="Pichon C."/>
            <person name="Rouy Z."/>
            <person name="Ruf C.S."/>
            <person name="Schneider D."/>
            <person name="Tourret J."/>
            <person name="Vacherie B."/>
            <person name="Vallenet D."/>
            <person name="Medigue C."/>
            <person name="Rocha E.P.C."/>
            <person name="Denamur E."/>
        </authorList>
    </citation>
    <scope>NUCLEOTIDE SEQUENCE [LARGE SCALE GENOMIC DNA]</scope>
    <source>
        <strain>ATCC 35469 / DSM 13698 / BCRC 15582 / CCUG 18766 / IAM 14443 / JCM 21226 / LMG 7866 / NBRC 102419 / NCTC 12128 / CDC 0568-73</strain>
    </source>
</reference>
<dbReference type="EMBL" id="CU928158">
    <property type="protein sequence ID" value="CAQ88524.1"/>
    <property type="molecule type" value="Genomic_DNA"/>
</dbReference>
<dbReference type="RefSeq" id="WP_001024887.1">
    <property type="nucleotide sequence ID" value="NC_011740.1"/>
</dbReference>
<dbReference type="SMR" id="B7LN13"/>
<dbReference type="KEGG" id="efe:EFER_0990"/>
<dbReference type="HOGENOM" id="CLU_035023_2_2_6"/>
<dbReference type="OrthoDB" id="5166626at2"/>
<dbReference type="Proteomes" id="UP000000745">
    <property type="component" value="Chromosome"/>
</dbReference>
<dbReference type="GO" id="GO:0005886">
    <property type="term" value="C:plasma membrane"/>
    <property type="evidence" value="ECO:0007669"/>
    <property type="project" value="UniProtKB-SubCell"/>
</dbReference>
<dbReference type="GO" id="GO:0008324">
    <property type="term" value="F:monoatomic cation transmembrane transporter activity"/>
    <property type="evidence" value="ECO:0007669"/>
    <property type="project" value="InterPro"/>
</dbReference>
<dbReference type="GO" id="GO:0006813">
    <property type="term" value="P:potassium ion transport"/>
    <property type="evidence" value="ECO:0007669"/>
    <property type="project" value="InterPro"/>
</dbReference>
<dbReference type="FunFam" id="3.30.70.1450:FF:000003">
    <property type="entry name" value="Putative transport protein YbjL"/>
    <property type="match status" value="1"/>
</dbReference>
<dbReference type="Gene3D" id="3.30.70.1450">
    <property type="entry name" value="Regulator of K+ conductance, C-terminal domain"/>
    <property type="match status" value="2"/>
</dbReference>
<dbReference type="HAMAP" id="MF_01015">
    <property type="entry name" value="YbjL"/>
    <property type="match status" value="1"/>
</dbReference>
<dbReference type="InterPro" id="IPR050144">
    <property type="entry name" value="AAE_transporter"/>
</dbReference>
<dbReference type="InterPro" id="IPR006037">
    <property type="entry name" value="RCK_C"/>
</dbReference>
<dbReference type="InterPro" id="IPR036721">
    <property type="entry name" value="RCK_C_sf"/>
</dbReference>
<dbReference type="InterPro" id="IPR023017">
    <property type="entry name" value="Transp_YbjL_put"/>
</dbReference>
<dbReference type="InterPro" id="IPR006512">
    <property type="entry name" value="YidE_YbjL"/>
</dbReference>
<dbReference type="NCBIfam" id="NF003440">
    <property type="entry name" value="PRK04972.1"/>
    <property type="match status" value="1"/>
</dbReference>
<dbReference type="NCBIfam" id="TIGR01625">
    <property type="entry name" value="YidE_YbjL_dupl"/>
    <property type="match status" value="2"/>
</dbReference>
<dbReference type="PANTHER" id="PTHR30445">
    <property type="entry name" value="K(+)_H(+) ANTIPORTER SUBUNIT KHTT"/>
    <property type="match status" value="1"/>
</dbReference>
<dbReference type="PANTHER" id="PTHR30445:SF10">
    <property type="entry name" value="TRANSPORT PROTEIN YBJL-RELATED"/>
    <property type="match status" value="1"/>
</dbReference>
<dbReference type="Pfam" id="PF06826">
    <property type="entry name" value="Asp-Al_Ex"/>
    <property type="match status" value="2"/>
</dbReference>
<dbReference type="Pfam" id="PF02080">
    <property type="entry name" value="TrkA_C"/>
    <property type="match status" value="2"/>
</dbReference>
<dbReference type="SUPFAM" id="SSF116726">
    <property type="entry name" value="TrkA C-terminal domain-like"/>
    <property type="match status" value="2"/>
</dbReference>
<dbReference type="PROSITE" id="PS51202">
    <property type="entry name" value="RCK_C"/>
    <property type="match status" value="2"/>
</dbReference>
<accession>B7LN13</accession>
<protein>
    <recommendedName>
        <fullName evidence="1">Putative transport protein YbjL</fullName>
    </recommendedName>
</protein>
<sequence>MNINVAELLNGNYILLLFVVLALGLCLGKLRLGSIQLGNSIGVLVVSLLLGQQHFSINTEALNLGFMLFIFCVGVEAGPNFFSIFFRDGKNYLMLALVMVGSALLIALGLGKLFGWDIGLTAGMLAGSMTSTPVLVGAGDTLRHFGISGTELSSALDNLSLGYALTYLIGLVSLIVGARYLPKLQHQDLQTSAQQIARERGLDTDATRKVYLPVIRAYRVGPELVAWTDGKNLRELGIYRQTGCYIERIRRNGILANPDGDAVLQMGDEIALVGYPDAHARLDPSFRNGKEVFDRDLLDMRIVTEEVVVKNHNAVGKRLAQLKLTDHGCFLNRVIRSQIEMPIDDNVVLNKGDVLQVSGDARRVKTIADRIGFISIHSQVTDLLAFCAFFIIGLMIGMITFQFSSFSFGMGNAAGLLFAGIMLGFMRANHPTFGYIPQGALSMVKEFGLMVFMAGVGLSAGSGINNGLGAIGGQMLVAGLIVSLVPVVICFLFGAYVLRMNRALLFGAMMGARTCAPAMEIISDTARSNIPALGYAGTYAIANVLLTLAGTIIVMVWPGLG</sequence>
<evidence type="ECO:0000255" key="1">
    <source>
        <dbReference type="HAMAP-Rule" id="MF_01015"/>
    </source>
</evidence>
<name>YBJL_ESCF3</name>
<gene>
    <name evidence="1" type="primary">ybjL</name>
    <name type="ordered locus">EFER_0990</name>
</gene>
<comment type="subcellular location">
    <subcellularLocation>
        <location evidence="1">Cell membrane</location>
        <topology evidence="1">Multi-pass membrane protein</topology>
    </subcellularLocation>
</comment>
<comment type="similarity">
    <text evidence="1">Belongs to the AAE transporter (TC 2.A.81) family. YbjL subfamily.</text>
</comment>
<feature type="chain" id="PRO_1000135187" description="Putative transport protein YbjL">
    <location>
        <begin position="1"/>
        <end position="561"/>
    </location>
</feature>
<feature type="transmembrane region" description="Helical" evidence="1">
    <location>
        <begin position="8"/>
        <end position="28"/>
    </location>
</feature>
<feature type="transmembrane region" description="Helical" evidence="1">
    <location>
        <begin position="32"/>
        <end position="52"/>
    </location>
</feature>
<feature type="transmembrane region" description="Helical" evidence="1">
    <location>
        <begin position="66"/>
        <end position="86"/>
    </location>
</feature>
<feature type="transmembrane region" description="Helical" evidence="1">
    <location>
        <begin position="94"/>
        <end position="114"/>
    </location>
</feature>
<feature type="transmembrane region" description="Helical" evidence="1">
    <location>
        <begin position="158"/>
        <end position="178"/>
    </location>
</feature>
<feature type="transmembrane region" description="Helical" evidence="1">
    <location>
        <begin position="383"/>
        <end position="403"/>
    </location>
</feature>
<feature type="transmembrane region" description="Helical" evidence="1">
    <location>
        <begin position="406"/>
        <end position="426"/>
    </location>
</feature>
<feature type="transmembrane region" description="Helical" evidence="1">
    <location>
        <begin position="451"/>
        <end position="471"/>
    </location>
</feature>
<feature type="transmembrane region" description="Helical" evidence="1">
    <location>
        <begin position="475"/>
        <end position="495"/>
    </location>
</feature>
<feature type="transmembrane region" description="Helical" evidence="1">
    <location>
        <begin position="540"/>
        <end position="560"/>
    </location>
</feature>
<feature type="domain" description="RCK C-terminal 1" evidence="1">
    <location>
        <begin position="202"/>
        <end position="288"/>
    </location>
</feature>
<feature type="domain" description="RCK C-terminal 2" evidence="1">
    <location>
        <begin position="292"/>
        <end position="373"/>
    </location>
</feature>